<protein>
    <recommendedName>
        <fullName evidence="1">Hydroxyacylglutathione hydrolase</fullName>
        <ecNumber evidence="1">3.1.2.6</ecNumber>
    </recommendedName>
    <alternativeName>
        <fullName evidence="1">Glyoxalase II</fullName>
        <shortName evidence="1">Glx II</shortName>
    </alternativeName>
</protein>
<sequence>MNLNSIPAFQDNYIWVLTNDEGRCVIVDPGEAAPVLKAIAEHKWMPEAIFLTHHHHDHVGGVKELLQHFPQMTVYGPAETQDKGATHLVGDGDTIRVLGEKFTLFATPGHTLGHVCYFSHPYLFCGDTLFSGGCGRLFEGTPSQMYQSLMKINSLPDDTLICCAHEYTLANIKFALSILPHDSFINEYYRKVKELRVKKQMTLPVILKNERKINLFLRTEDIDLINEINKETILQQPEARFAWLRSKKDTF</sequence>
<gene>
    <name evidence="1" type="primary">gloB</name>
    <name type="ordered locus">SNSL254_A0286</name>
</gene>
<dbReference type="EC" id="3.1.2.6" evidence="1"/>
<dbReference type="EMBL" id="CP001113">
    <property type="protein sequence ID" value="ACF63243.1"/>
    <property type="molecule type" value="Genomic_DNA"/>
</dbReference>
<dbReference type="RefSeq" id="WP_001052773.1">
    <property type="nucleotide sequence ID" value="NZ_CCMR01000003.1"/>
</dbReference>
<dbReference type="SMR" id="B4SV37"/>
<dbReference type="KEGG" id="see:SNSL254_A0286"/>
<dbReference type="HOGENOM" id="CLU_030571_4_1_6"/>
<dbReference type="UniPathway" id="UPA00619">
    <property type="reaction ID" value="UER00676"/>
</dbReference>
<dbReference type="Proteomes" id="UP000008824">
    <property type="component" value="Chromosome"/>
</dbReference>
<dbReference type="GO" id="GO:0004416">
    <property type="term" value="F:hydroxyacylglutathione hydrolase activity"/>
    <property type="evidence" value="ECO:0007669"/>
    <property type="project" value="UniProtKB-UniRule"/>
</dbReference>
<dbReference type="GO" id="GO:0046872">
    <property type="term" value="F:metal ion binding"/>
    <property type="evidence" value="ECO:0007669"/>
    <property type="project" value="UniProtKB-KW"/>
</dbReference>
<dbReference type="GO" id="GO:0019243">
    <property type="term" value="P:methylglyoxal catabolic process to D-lactate via S-lactoyl-glutathione"/>
    <property type="evidence" value="ECO:0007669"/>
    <property type="project" value="InterPro"/>
</dbReference>
<dbReference type="CDD" id="cd07723">
    <property type="entry name" value="hydroxyacylglutathione_hydrolase_MBL-fold"/>
    <property type="match status" value="1"/>
</dbReference>
<dbReference type="Gene3D" id="3.60.15.10">
    <property type="entry name" value="Ribonuclease Z/Hydroxyacylglutathione hydrolase-like"/>
    <property type="match status" value="1"/>
</dbReference>
<dbReference type="HAMAP" id="MF_01374">
    <property type="entry name" value="Glyoxalase_2"/>
    <property type="match status" value="1"/>
</dbReference>
<dbReference type="InterPro" id="IPR035680">
    <property type="entry name" value="Clx_II_MBL"/>
</dbReference>
<dbReference type="InterPro" id="IPR050110">
    <property type="entry name" value="Glyoxalase_II_hydrolase"/>
</dbReference>
<dbReference type="InterPro" id="IPR032282">
    <property type="entry name" value="HAGH_C"/>
</dbReference>
<dbReference type="InterPro" id="IPR017782">
    <property type="entry name" value="Hydroxyacylglutathione_Hdrlase"/>
</dbReference>
<dbReference type="InterPro" id="IPR001279">
    <property type="entry name" value="Metallo-B-lactamas"/>
</dbReference>
<dbReference type="InterPro" id="IPR036866">
    <property type="entry name" value="RibonucZ/Hydroxyglut_hydro"/>
</dbReference>
<dbReference type="NCBIfam" id="TIGR03413">
    <property type="entry name" value="GSH_gloB"/>
    <property type="match status" value="1"/>
</dbReference>
<dbReference type="NCBIfam" id="NF007597">
    <property type="entry name" value="PRK10241.1"/>
    <property type="match status" value="1"/>
</dbReference>
<dbReference type="PANTHER" id="PTHR43705">
    <property type="entry name" value="HYDROXYACYLGLUTATHIONE HYDROLASE"/>
    <property type="match status" value="1"/>
</dbReference>
<dbReference type="PANTHER" id="PTHR43705:SF1">
    <property type="entry name" value="HYDROXYACYLGLUTATHIONE HYDROLASE GLOB"/>
    <property type="match status" value="1"/>
</dbReference>
<dbReference type="Pfam" id="PF16123">
    <property type="entry name" value="HAGH_C"/>
    <property type="match status" value="1"/>
</dbReference>
<dbReference type="Pfam" id="PF00753">
    <property type="entry name" value="Lactamase_B"/>
    <property type="match status" value="1"/>
</dbReference>
<dbReference type="PIRSF" id="PIRSF005457">
    <property type="entry name" value="Glx"/>
    <property type="match status" value="1"/>
</dbReference>
<dbReference type="SMART" id="SM00849">
    <property type="entry name" value="Lactamase_B"/>
    <property type="match status" value="1"/>
</dbReference>
<dbReference type="SUPFAM" id="SSF56281">
    <property type="entry name" value="Metallo-hydrolase/oxidoreductase"/>
    <property type="match status" value="1"/>
</dbReference>
<reference key="1">
    <citation type="journal article" date="2011" name="J. Bacteriol.">
        <title>Comparative genomics of 28 Salmonella enterica isolates: evidence for CRISPR-mediated adaptive sublineage evolution.</title>
        <authorList>
            <person name="Fricke W.F."/>
            <person name="Mammel M.K."/>
            <person name="McDermott P.F."/>
            <person name="Tartera C."/>
            <person name="White D.G."/>
            <person name="Leclerc J.E."/>
            <person name="Ravel J."/>
            <person name="Cebula T.A."/>
        </authorList>
    </citation>
    <scope>NUCLEOTIDE SEQUENCE [LARGE SCALE GENOMIC DNA]</scope>
    <source>
        <strain>SL254</strain>
    </source>
</reference>
<keyword id="KW-0378">Hydrolase</keyword>
<keyword id="KW-0479">Metal-binding</keyword>
<keyword id="KW-0862">Zinc</keyword>
<proteinExistence type="inferred from homology"/>
<accession>B4SV37</accession>
<comment type="function">
    <text evidence="1">Thiolesterase that catalyzes the hydrolysis of S-D-lactoyl-glutathione to form glutathione and D-lactic acid.</text>
</comment>
<comment type="catalytic activity">
    <reaction evidence="1">
        <text>an S-(2-hydroxyacyl)glutathione + H2O = a 2-hydroxy carboxylate + glutathione + H(+)</text>
        <dbReference type="Rhea" id="RHEA:21864"/>
        <dbReference type="ChEBI" id="CHEBI:15377"/>
        <dbReference type="ChEBI" id="CHEBI:15378"/>
        <dbReference type="ChEBI" id="CHEBI:57925"/>
        <dbReference type="ChEBI" id="CHEBI:58896"/>
        <dbReference type="ChEBI" id="CHEBI:71261"/>
        <dbReference type="EC" id="3.1.2.6"/>
    </reaction>
</comment>
<comment type="cofactor">
    <cofactor evidence="1">
        <name>Zn(2+)</name>
        <dbReference type="ChEBI" id="CHEBI:29105"/>
    </cofactor>
    <text evidence="1">Binds 2 Zn(2+) ions per subunit.</text>
</comment>
<comment type="pathway">
    <text evidence="1">Secondary metabolite metabolism; methylglyoxal degradation; (R)-lactate from methylglyoxal: step 2/2.</text>
</comment>
<comment type="subunit">
    <text evidence="1">Monomer.</text>
</comment>
<comment type="similarity">
    <text evidence="1">Belongs to the metallo-beta-lactamase superfamily. Glyoxalase II family.</text>
</comment>
<name>GLO2_SALNS</name>
<feature type="chain" id="PRO_1000144799" description="Hydroxyacylglutathione hydrolase">
    <location>
        <begin position="1"/>
        <end position="251"/>
    </location>
</feature>
<feature type="binding site" evidence="1">
    <location>
        <position position="53"/>
    </location>
    <ligand>
        <name>Zn(2+)</name>
        <dbReference type="ChEBI" id="CHEBI:29105"/>
        <label>1</label>
    </ligand>
</feature>
<feature type="binding site" evidence="1">
    <location>
        <position position="55"/>
    </location>
    <ligand>
        <name>Zn(2+)</name>
        <dbReference type="ChEBI" id="CHEBI:29105"/>
        <label>1</label>
    </ligand>
</feature>
<feature type="binding site" evidence="1">
    <location>
        <position position="57"/>
    </location>
    <ligand>
        <name>Zn(2+)</name>
        <dbReference type="ChEBI" id="CHEBI:29105"/>
        <label>2</label>
    </ligand>
</feature>
<feature type="binding site" evidence="1">
    <location>
        <position position="58"/>
    </location>
    <ligand>
        <name>Zn(2+)</name>
        <dbReference type="ChEBI" id="CHEBI:29105"/>
        <label>2</label>
    </ligand>
</feature>
<feature type="binding site" evidence="1">
    <location>
        <position position="110"/>
    </location>
    <ligand>
        <name>Zn(2+)</name>
        <dbReference type="ChEBI" id="CHEBI:29105"/>
        <label>1</label>
    </ligand>
</feature>
<feature type="binding site" evidence="1">
    <location>
        <position position="127"/>
    </location>
    <ligand>
        <name>Zn(2+)</name>
        <dbReference type="ChEBI" id="CHEBI:29105"/>
        <label>1</label>
    </ligand>
</feature>
<feature type="binding site" evidence="1">
    <location>
        <position position="127"/>
    </location>
    <ligand>
        <name>Zn(2+)</name>
        <dbReference type="ChEBI" id="CHEBI:29105"/>
        <label>2</label>
    </ligand>
</feature>
<feature type="binding site" evidence="1">
    <location>
        <position position="165"/>
    </location>
    <ligand>
        <name>Zn(2+)</name>
        <dbReference type="ChEBI" id="CHEBI:29105"/>
        <label>2</label>
    </ligand>
</feature>
<evidence type="ECO:0000255" key="1">
    <source>
        <dbReference type="HAMAP-Rule" id="MF_01374"/>
    </source>
</evidence>
<organism>
    <name type="scientific">Salmonella newport (strain SL254)</name>
    <dbReference type="NCBI Taxonomy" id="423368"/>
    <lineage>
        <taxon>Bacteria</taxon>
        <taxon>Pseudomonadati</taxon>
        <taxon>Pseudomonadota</taxon>
        <taxon>Gammaproteobacteria</taxon>
        <taxon>Enterobacterales</taxon>
        <taxon>Enterobacteriaceae</taxon>
        <taxon>Salmonella</taxon>
    </lineage>
</organism>